<sequence>MILYPAIDLKDGQCVRLLHGDMDKATVFNTSPADQAQRFVQDGFSWLHVVDLNGAIEGKSVNTAAVEQILESISIPVQLGGGIRTLEGVEAWIEAGVSRVILGTVAVHDPELVKKAARLWPEQIAVAVDVRDGKVAVDGWTGLSDLSAIDLSRRFEDAGVAALIITDISRDGALTGVNVEGVGELADAVSIPVIASGGVAAVADIERLKARQGVEIAGAILGRSLYAGTIKPSEALIAAAA</sequence>
<dbReference type="EC" id="5.3.1.16"/>
<dbReference type="EMBL" id="AE005673">
    <property type="protein sequence ID" value="AAK25698.1"/>
    <property type="molecule type" value="Genomic_DNA"/>
</dbReference>
<dbReference type="PIR" id="F87712">
    <property type="entry name" value="F87712"/>
</dbReference>
<dbReference type="RefSeq" id="NP_422530.1">
    <property type="nucleotide sequence ID" value="NC_002696.2"/>
</dbReference>
<dbReference type="SMR" id="Q9A230"/>
<dbReference type="STRING" id="190650.CC_3736"/>
<dbReference type="EnsemblBacteria" id="AAK25698">
    <property type="protein sequence ID" value="AAK25698"/>
    <property type="gene ID" value="CC_3736"/>
</dbReference>
<dbReference type="KEGG" id="ccr:CC_3736"/>
<dbReference type="PATRIC" id="fig|190650.5.peg.3738"/>
<dbReference type="eggNOG" id="COG0106">
    <property type="taxonomic scope" value="Bacteria"/>
</dbReference>
<dbReference type="HOGENOM" id="CLU_048577_1_1_5"/>
<dbReference type="BioCyc" id="CAULO:CC3736-MONOMER"/>
<dbReference type="UniPathway" id="UPA00031">
    <property type="reaction ID" value="UER00009"/>
</dbReference>
<dbReference type="Proteomes" id="UP000001816">
    <property type="component" value="Chromosome"/>
</dbReference>
<dbReference type="GO" id="GO:0005737">
    <property type="term" value="C:cytoplasm"/>
    <property type="evidence" value="ECO:0007669"/>
    <property type="project" value="UniProtKB-SubCell"/>
</dbReference>
<dbReference type="GO" id="GO:0003949">
    <property type="term" value="F:1-(5-phosphoribosyl)-5-[(5-phosphoribosylamino)methylideneamino]imidazole-4-carboxamide isomerase activity"/>
    <property type="evidence" value="ECO:0007669"/>
    <property type="project" value="UniProtKB-UniRule"/>
</dbReference>
<dbReference type="GO" id="GO:0000105">
    <property type="term" value="P:L-histidine biosynthetic process"/>
    <property type="evidence" value="ECO:0007669"/>
    <property type="project" value="UniProtKB-UniRule"/>
</dbReference>
<dbReference type="GO" id="GO:0000162">
    <property type="term" value="P:L-tryptophan biosynthetic process"/>
    <property type="evidence" value="ECO:0007669"/>
    <property type="project" value="TreeGrafter"/>
</dbReference>
<dbReference type="CDD" id="cd04732">
    <property type="entry name" value="HisA"/>
    <property type="match status" value="1"/>
</dbReference>
<dbReference type="FunFam" id="3.20.20.70:FF:000009">
    <property type="entry name" value="1-(5-phosphoribosyl)-5-[(5-phosphoribosylamino)methylideneamino] imidazole-4-carboxamide isomerase"/>
    <property type="match status" value="1"/>
</dbReference>
<dbReference type="Gene3D" id="3.20.20.70">
    <property type="entry name" value="Aldolase class I"/>
    <property type="match status" value="1"/>
</dbReference>
<dbReference type="HAMAP" id="MF_01014">
    <property type="entry name" value="HisA"/>
    <property type="match status" value="1"/>
</dbReference>
<dbReference type="InterPro" id="IPR013785">
    <property type="entry name" value="Aldolase_TIM"/>
</dbReference>
<dbReference type="InterPro" id="IPR006062">
    <property type="entry name" value="His_biosynth"/>
</dbReference>
<dbReference type="InterPro" id="IPR006063">
    <property type="entry name" value="HisA_bact_arch"/>
</dbReference>
<dbReference type="InterPro" id="IPR044524">
    <property type="entry name" value="Isoase_HisA-like"/>
</dbReference>
<dbReference type="InterPro" id="IPR023016">
    <property type="entry name" value="Isoase_HisA-like_bact"/>
</dbReference>
<dbReference type="InterPro" id="IPR011060">
    <property type="entry name" value="RibuloseP-bd_barrel"/>
</dbReference>
<dbReference type="NCBIfam" id="TIGR00007">
    <property type="entry name" value="1-(5-phosphoribosyl)-5-[(5-phosphoribosylamino)methylideneamino]imidazole-4-carboxamide isomerase"/>
    <property type="match status" value="1"/>
</dbReference>
<dbReference type="PANTHER" id="PTHR43090">
    <property type="entry name" value="1-(5-PHOSPHORIBOSYL)-5-[(5-PHOSPHORIBOSYLAMINO)METHYLIDENEAMINO] IMIDAZOLE-4-CARBOXAMIDE ISOMERASE"/>
    <property type="match status" value="1"/>
</dbReference>
<dbReference type="PANTHER" id="PTHR43090:SF2">
    <property type="entry name" value="1-(5-PHOSPHORIBOSYL)-5-[(5-PHOSPHORIBOSYLAMINO)METHYLIDENEAMINO] IMIDAZOLE-4-CARBOXAMIDE ISOMERASE"/>
    <property type="match status" value="1"/>
</dbReference>
<dbReference type="Pfam" id="PF00977">
    <property type="entry name" value="His_biosynth"/>
    <property type="match status" value="1"/>
</dbReference>
<dbReference type="SUPFAM" id="SSF51366">
    <property type="entry name" value="Ribulose-phoshate binding barrel"/>
    <property type="match status" value="1"/>
</dbReference>
<protein>
    <recommendedName>
        <fullName>1-(5-phosphoribosyl)-5-[(5-phosphoribosylamino)methylideneamino] imidazole-4-carboxamide isomerase</fullName>
        <ecNumber>5.3.1.16</ecNumber>
    </recommendedName>
    <alternativeName>
        <fullName>Phosphoribosylformimino-5-aminoimidazole carboxamide ribotide isomerase</fullName>
    </alternativeName>
</protein>
<comment type="catalytic activity">
    <reaction>
        <text>1-(5-phospho-beta-D-ribosyl)-5-[(5-phospho-beta-D-ribosylamino)methylideneamino]imidazole-4-carboxamide = 5-[(5-phospho-1-deoxy-D-ribulos-1-ylimino)methylamino]-1-(5-phospho-beta-D-ribosyl)imidazole-4-carboxamide</text>
        <dbReference type="Rhea" id="RHEA:15469"/>
        <dbReference type="ChEBI" id="CHEBI:58435"/>
        <dbReference type="ChEBI" id="CHEBI:58525"/>
        <dbReference type="EC" id="5.3.1.16"/>
    </reaction>
</comment>
<comment type="pathway">
    <text>Amino-acid biosynthesis; L-histidine biosynthesis; L-histidine from 5-phospho-alpha-D-ribose 1-diphosphate: step 4/9.</text>
</comment>
<comment type="subcellular location">
    <subcellularLocation>
        <location evidence="1">Cytoplasm</location>
    </subcellularLocation>
</comment>
<comment type="similarity">
    <text evidence="2">Belongs to the HisA/HisF family.</text>
</comment>
<name>HIS4_CAUVC</name>
<gene>
    <name type="primary">hisA</name>
    <name type="ordered locus">CC_3736</name>
</gene>
<accession>Q9A230</accession>
<reference key="1">
    <citation type="journal article" date="2001" name="Proc. Natl. Acad. Sci. U.S.A.">
        <title>Complete genome sequence of Caulobacter crescentus.</title>
        <authorList>
            <person name="Nierman W.C."/>
            <person name="Feldblyum T.V."/>
            <person name="Laub M.T."/>
            <person name="Paulsen I.T."/>
            <person name="Nelson K.E."/>
            <person name="Eisen J.A."/>
            <person name="Heidelberg J.F."/>
            <person name="Alley M.R.K."/>
            <person name="Ohta N."/>
            <person name="Maddock J.R."/>
            <person name="Potocka I."/>
            <person name="Nelson W.C."/>
            <person name="Newton A."/>
            <person name="Stephens C."/>
            <person name="Phadke N.D."/>
            <person name="Ely B."/>
            <person name="DeBoy R.T."/>
            <person name="Dodson R.J."/>
            <person name="Durkin A.S."/>
            <person name="Gwinn M.L."/>
            <person name="Haft D.H."/>
            <person name="Kolonay J.F."/>
            <person name="Smit J."/>
            <person name="Craven M.B."/>
            <person name="Khouri H.M."/>
            <person name="Shetty J."/>
            <person name="Berry K.J."/>
            <person name="Utterback T.R."/>
            <person name="Tran K."/>
            <person name="Wolf A.M."/>
            <person name="Vamathevan J.J."/>
            <person name="Ermolaeva M.D."/>
            <person name="White O."/>
            <person name="Salzberg S.L."/>
            <person name="Venter J.C."/>
            <person name="Shapiro L."/>
            <person name="Fraser C.M."/>
        </authorList>
    </citation>
    <scope>NUCLEOTIDE SEQUENCE [LARGE SCALE GENOMIC DNA]</scope>
    <source>
        <strain>ATCC 19089 / CIP 103742 / CB 15</strain>
    </source>
</reference>
<proteinExistence type="inferred from homology"/>
<feature type="chain" id="PRO_0000141995" description="1-(5-phosphoribosyl)-5-[(5-phosphoribosylamino)methylideneamino] imidazole-4-carboxamide isomerase">
    <location>
        <begin position="1"/>
        <end position="241"/>
    </location>
</feature>
<feature type="active site" description="Proton acceptor" evidence="1">
    <location>
        <position position="8"/>
    </location>
</feature>
<feature type="active site" description="Proton donor" evidence="1">
    <location>
        <position position="129"/>
    </location>
</feature>
<keyword id="KW-0028">Amino-acid biosynthesis</keyword>
<keyword id="KW-0963">Cytoplasm</keyword>
<keyword id="KW-0368">Histidine biosynthesis</keyword>
<keyword id="KW-0413">Isomerase</keyword>
<keyword id="KW-1185">Reference proteome</keyword>
<organism>
    <name type="scientific">Caulobacter vibrioides (strain ATCC 19089 / CIP 103742 / CB 15)</name>
    <name type="common">Caulobacter crescentus</name>
    <dbReference type="NCBI Taxonomy" id="190650"/>
    <lineage>
        <taxon>Bacteria</taxon>
        <taxon>Pseudomonadati</taxon>
        <taxon>Pseudomonadota</taxon>
        <taxon>Alphaproteobacteria</taxon>
        <taxon>Caulobacterales</taxon>
        <taxon>Caulobacteraceae</taxon>
        <taxon>Caulobacter</taxon>
    </lineage>
</organism>
<evidence type="ECO:0000250" key="1"/>
<evidence type="ECO:0000305" key="2"/>